<sequence>MVYIQNTHLNDKKQIYQACAQIYGLGHHHCLQICDVLGVSPETRLGMLSTGQHTLLAQIITQNYDTGSDVRRFTRQNIQRLVNIHSYRGYRHIQGLPVRGQRSHGNARTVRKLKNVIKI</sequence>
<evidence type="ECO:0000250" key="1"/>
<evidence type="ECO:0000305" key="2"/>
<protein>
    <recommendedName>
        <fullName evidence="2">Small ribosomal subunit protein uS13m</fullName>
    </recommendedName>
    <alternativeName>
        <fullName>Ribosomal protein S13, mitochondrial</fullName>
    </alternativeName>
</protein>
<organism>
    <name type="scientific">Prototheca wickerhamii</name>
    <dbReference type="NCBI Taxonomy" id="3111"/>
    <lineage>
        <taxon>Eukaryota</taxon>
        <taxon>Viridiplantae</taxon>
        <taxon>Chlorophyta</taxon>
        <taxon>core chlorophytes</taxon>
        <taxon>Trebouxiophyceae</taxon>
        <taxon>Chlorellales</taxon>
        <taxon>Chlorellaceae</taxon>
        <taxon>Prototheca</taxon>
    </lineage>
</organism>
<accession>P46747</accession>
<dbReference type="EMBL" id="U02970">
    <property type="protein sequence ID" value="AAD12646.1"/>
    <property type="molecule type" value="Genomic_DNA"/>
</dbReference>
<dbReference type="PIR" id="T11927">
    <property type="entry name" value="T11927"/>
</dbReference>
<dbReference type="RefSeq" id="NP_042258.1">
    <property type="nucleotide sequence ID" value="NC_001613.1"/>
</dbReference>
<dbReference type="SMR" id="P46747"/>
<dbReference type="GeneID" id="802141"/>
<dbReference type="GO" id="GO:0005739">
    <property type="term" value="C:mitochondrion"/>
    <property type="evidence" value="ECO:0007669"/>
    <property type="project" value="UniProtKB-SubCell"/>
</dbReference>
<dbReference type="GO" id="GO:0015935">
    <property type="term" value="C:small ribosomal subunit"/>
    <property type="evidence" value="ECO:0007669"/>
    <property type="project" value="TreeGrafter"/>
</dbReference>
<dbReference type="GO" id="GO:0019843">
    <property type="term" value="F:rRNA binding"/>
    <property type="evidence" value="ECO:0007669"/>
    <property type="project" value="UniProtKB-KW"/>
</dbReference>
<dbReference type="GO" id="GO:0003735">
    <property type="term" value="F:structural constituent of ribosome"/>
    <property type="evidence" value="ECO:0007669"/>
    <property type="project" value="InterPro"/>
</dbReference>
<dbReference type="GO" id="GO:0006412">
    <property type="term" value="P:translation"/>
    <property type="evidence" value="ECO:0007669"/>
    <property type="project" value="InterPro"/>
</dbReference>
<dbReference type="Gene3D" id="1.10.8.50">
    <property type="match status" value="1"/>
</dbReference>
<dbReference type="Gene3D" id="4.10.910.10">
    <property type="entry name" value="30s ribosomal protein s13, domain 2"/>
    <property type="match status" value="1"/>
</dbReference>
<dbReference type="HAMAP" id="MF_01315">
    <property type="entry name" value="Ribosomal_uS13"/>
    <property type="match status" value="1"/>
</dbReference>
<dbReference type="InterPro" id="IPR027437">
    <property type="entry name" value="Rbsml_uS13_C"/>
</dbReference>
<dbReference type="InterPro" id="IPR001892">
    <property type="entry name" value="Ribosomal_uS13"/>
</dbReference>
<dbReference type="InterPro" id="IPR010979">
    <property type="entry name" value="Ribosomal_uS13-like_H2TH"/>
</dbReference>
<dbReference type="InterPro" id="IPR018269">
    <property type="entry name" value="Ribosomal_uS13_CS"/>
</dbReference>
<dbReference type="PANTHER" id="PTHR10871">
    <property type="entry name" value="30S RIBOSOMAL PROTEIN S13/40S RIBOSOMAL PROTEIN S18"/>
    <property type="match status" value="1"/>
</dbReference>
<dbReference type="PANTHER" id="PTHR10871:SF1">
    <property type="entry name" value="SMALL RIBOSOMAL SUBUNIT PROTEIN US13M"/>
    <property type="match status" value="1"/>
</dbReference>
<dbReference type="Pfam" id="PF00416">
    <property type="entry name" value="Ribosomal_S13"/>
    <property type="match status" value="1"/>
</dbReference>
<dbReference type="PIRSF" id="PIRSF002134">
    <property type="entry name" value="Ribosomal_S13"/>
    <property type="match status" value="1"/>
</dbReference>
<dbReference type="SUPFAM" id="SSF46946">
    <property type="entry name" value="S13-like H2TH domain"/>
    <property type="match status" value="1"/>
</dbReference>
<dbReference type="PROSITE" id="PS00646">
    <property type="entry name" value="RIBOSOMAL_S13_1"/>
    <property type="match status" value="1"/>
</dbReference>
<dbReference type="PROSITE" id="PS50159">
    <property type="entry name" value="RIBOSOMAL_S13_2"/>
    <property type="match status" value="1"/>
</dbReference>
<gene>
    <name type="primary">RPS13</name>
</gene>
<feature type="chain" id="PRO_0000132206" description="Small ribosomal subunit protein uS13m">
    <location>
        <begin position="1"/>
        <end position="119"/>
    </location>
</feature>
<reference key="1">
    <citation type="journal article" date="1994" name="J. Mol. Biol.">
        <title>Complete sequence of the mitochondrial DNA of the chlorophyte alga Prototheca wickerhamii. Gene content and genome organization.</title>
        <authorList>
            <person name="Wolff G."/>
            <person name="Plante I."/>
            <person name="Lang B.F."/>
            <person name="Kueck U."/>
            <person name="Burger G."/>
        </authorList>
    </citation>
    <scope>NUCLEOTIDE SEQUENCE [GENOMIC DNA]</scope>
    <source>
        <strain>263-11</strain>
    </source>
</reference>
<keyword id="KW-0496">Mitochondrion</keyword>
<keyword id="KW-0687">Ribonucleoprotein</keyword>
<keyword id="KW-0689">Ribosomal protein</keyword>
<keyword id="KW-0694">RNA-binding</keyword>
<keyword id="KW-0699">rRNA-binding</keyword>
<proteinExistence type="inferred from homology"/>
<name>RT13_PROWI</name>
<comment type="function">
    <text evidence="1">Located at the top of the head of the small subunit, it contacts several helices of the small subunit rRNA.</text>
</comment>
<comment type="subunit">
    <text>Part of the small ribosomal subunit.</text>
</comment>
<comment type="subcellular location">
    <subcellularLocation>
        <location>Mitochondrion</location>
    </subcellularLocation>
</comment>
<comment type="similarity">
    <text evidence="2">Belongs to the universal ribosomal protein uS13 family.</text>
</comment>
<geneLocation type="mitochondrion"/>